<dbReference type="EC" id="2.5.1.78" evidence="1"/>
<dbReference type="EMBL" id="BA000002">
    <property type="protein sequence ID" value="BAA80360.2"/>
    <property type="molecule type" value="Genomic_DNA"/>
</dbReference>
<dbReference type="PIR" id="B72613">
    <property type="entry name" value="B72613"/>
</dbReference>
<dbReference type="RefSeq" id="WP_010866328.1">
    <property type="nucleotide sequence ID" value="NC_000854.2"/>
</dbReference>
<dbReference type="SMR" id="Q9YC88"/>
<dbReference type="STRING" id="272557.APE_1366.1"/>
<dbReference type="EnsemblBacteria" id="BAA80360">
    <property type="protein sequence ID" value="BAA80360"/>
    <property type="gene ID" value="APE_1366.1"/>
</dbReference>
<dbReference type="GeneID" id="1445969"/>
<dbReference type="KEGG" id="ape:APE_1366.1"/>
<dbReference type="PATRIC" id="fig|272557.25.peg.931"/>
<dbReference type="eggNOG" id="arCOG01323">
    <property type="taxonomic scope" value="Archaea"/>
</dbReference>
<dbReference type="UniPathway" id="UPA00275">
    <property type="reaction ID" value="UER00404"/>
</dbReference>
<dbReference type="Proteomes" id="UP000002518">
    <property type="component" value="Chromosome"/>
</dbReference>
<dbReference type="GO" id="GO:0009349">
    <property type="term" value="C:riboflavin synthase complex"/>
    <property type="evidence" value="ECO:0007669"/>
    <property type="project" value="InterPro"/>
</dbReference>
<dbReference type="GO" id="GO:0000906">
    <property type="term" value="F:6,7-dimethyl-8-ribityllumazine synthase activity"/>
    <property type="evidence" value="ECO:0007669"/>
    <property type="project" value="UniProtKB-UniRule"/>
</dbReference>
<dbReference type="GO" id="GO:0009231">
    <property type="term" value="P:riboflavin biosynthetic process"/>
    <property type="evidence" value="ECO:0007669"/>
    <property type="project" value="UniProtKB-UniRule"/>
</dbReference>
<dbReference type="CDD" id="cd09211">
    <property type="entry name" value="Lumazine_synthase_archaeal"/>
    <property type="match status" value="1"/>
</dbReference>
<dbReference type="FunFam" id="3.40.50.960:FF:000003">
    <property type="entry name" value="6,7-dimethyl-8-ribityllumazine synthase"/>
    <property type="match status" value="1"/>
</dbReference>
<dbReference type="Gene3D" id="3.40.50.960">
    <property type="entry name" value="Lumazine/riboflavin synthase"/>
    <property type="match status" value="1"/>
</dbReference>
<dbReference type="HAMAP" id="MF_00178">
    <property type="entry name" value="Lumazine_synth"/>
    <property type="match status" value="1"/>
</dbReference>
<dbReference type="InterPro" id="IPR034964">
    <property type="entry name" value="LS"/>
</dbReference>
<dbReference type="InterPro" id="IPR002180">
    <property type="entry name" value="LS/RS"/>
</dbReference>
<dbReference type="InterPro" id="IPR036467">
    <property type="entry name" value="LS/RS_sf"/>
</dbReference>
<dbReference type="NCBIfam" id="TIGR00114">
    <property type="entry name" value="lumazine-synth"/>
    <property type="match status" value="1"/>
</dbReference>
<dbReference type="PANTHER" id="PTHR21058:SF0">
    <property type="entry name" value="6,7-DIMETHYL-8-RIBITYLLUMAZINE SYNTHASE"/>
    <property type="match status" value="1"/>
</dbReference>
<dbReference type="PANTHER" id="PTHR21058">
    <property type="entry name" value="6,7-DIMETHYL-8-RIBITYLLUMAZINE SYNTHASE DMRL SYNTHASE LUMAZINE SYNTHASE"/>
    <property type="match status" value="1"/>
</dbReference>
<dbReference type="Pfam" id="PF00885">
    <property type="entry name" value="DMRL_synthase"/>
    <property type="match status" value="1"/>
</dbReference>
<dbReference type="SUPFAM" id="SSF52121">
    <property type="entry name" value="Lumazine synthase"/>
    <property type="match status" value="1"/>
</dbReference>
<gene>
    <name evidence="1" type="primary">ribH</name>
    <name type="ordered locus">APE_1366.1</name>
</gene>
<proteinExistence type="inferred from homology"/>
<accession>Q9YC88</accession>
<keyword id="KW-1185">Reference proteome</keyword>
<keyword id="KW-0686">Riboflavin biosynthesis</keyword>
<keyword id="KW-0808">Transferase</keyword>
<evidence type="ECO:0000255" key="1">
    <source>
        <dbReference type="HAMAP-Rule" id="MF_00178"/>
    </source>
</evidence>
<name>RISB_AERPE</name>
<organism>
    <name type="scientific">Aeropyrum pernix (strain ATCC 700893 / DSM 11879 / JCM 9820 / NBRC 100138 / K1)</name>
    <dbReference type="NCBI Taxonomy" id="272557"/>
    <lineage>
        <taxon>Archaea</taxon>
        <taxon>Thermoproteota</taxon>
        <taxon>Thermoprotei</taxon>
        <taxon>Desulfurococcales</taxon>
        <taxon>Desulfurococcaceae</taxon>
        <taxon>Aeropyrum</taxon>
    </lineage>
</organism>
<feature type="chain" id="PRO_0000134839" description="6,7-dimethyl-8-ribityllumazine synthase">
    <location>
        <begin position="1"/>
        <end position="147"/>
    </location>
</feature>
<feature type="active site" description="Proton donor" evidence="1">
    <location>
        <position position="81"/>
    </location>
</feature>
<feature type="binding site" evidence="1">
    <location>
        <position position="16"/>
    </location>
    <ligand>
        <name>5-amino-6-(D-ribitylamino)uracil</name>
        <dbReference type="ChEBI" id="CHEBI:15934"/>
    </ligand>
</feature>
<feature type="binding site" evidence="1">
    <location>
        <begin position="48"/>
        <end position="50"/>
    </location>
    <ligand>
        <name>5-amino-6-(D-ribitylamino)uracil</name>
        <dbReference type="ChEBI" id="CHEBI:15934"/>
    </ligand>
</feature>
<feature type="binding site" evidence="1">
    <location>
        <begin position="73"/>
        <end position="75"/>
    </location>
    <ligand>
        <name>5-amino-6-(D-ribitylamino)uracil</name>
        <dbReference type="ChEBI" id="CHEBI:15934"/>
    </ligand>
</feature>
<feature type="binding site" evidence="1">
    <location>
        <begin position="78"/>
        <end position="79"/>
    </location>
    <ligand>
        <name>(2S)-2-hydroxy-3-oxobutyl phosphate</name>
        <dbReference type="ChEBI" id="CHEBI:58830"/>
    </ligand>
</feature>
<feature type="binding site" evidence="1">
    <location>
        <position position="106"/>
    </location>
    <ligand>
        <name>5-amino-6-(D-ribitylamino)uracil</name>
        <dbReference type="ChEBI" id="CHEBI:15934"/>
    </ligand>
</feature>
<feature type="binding site" evidence="1">
    <location>
        <position position="121"/>
    </location>
    <ligand>
        <name>(2S)-2-hydroxy-3-oxobutyl phosphate</name>
        <dbReference type="ChEBI" id="CHEBI:58830"/>
    </ligand>
</feature>
<comment type="function">
    <text evidence="1">Catalyzes the formation of 6,7-dimethyl-8-ribityllumazine by condensation of 5-amino-6-(D-ribitylamino)uracil with 3,4-dihydroxy-2-butanone 4-phosphate. This is the penultimate step in the biosynthesis of riboflavin.</text>
</comment>
<comment type="catalytic activity">
    <reaction evidence="1">
        <text>(2S)-2-hydroxy-3-oxobutyl phosphate + 5-amino-6-(D-ribitylamino)uracil = 6,7-dimethyl-8-(1-D-ribityl)lumazine + phosphate + 2 H2O + H(+)</text>
        <dbReference type="Rhea" id="RHEA:26152"/>
        <dbReference type="ChEBI" id="CHEBI:15377"/>
        <dbReference type="ChEBI" id="CHEBI:15378"/>
        <dbReference type="ChEBI" id="CHEBI:15934"/>
        <dbReference type="ChEBI" id="CHEBI:43474"/>
        <dbReference type="ChEBI" id="CHEBI:58201"/>
        <dbReference type="ChEBI" id="CHEBI:58830"/>
        <dbReference type="EC" id="2.5.1.78"/>
    </reaction>
</comment>
<comment type="pathway">
    <text evidence="1">Cofactor biosynthesis; riboflavin biosynthesis; riboflavin from 2-hydroxy-3-oxobutyl phosphate and 5-amino-6-(D-ribitylamino)uracil: step 1/2.</text>
</comment>
<comment type="similarity">
    <text evidence="1">Belongs to the DMRL synthase family.</text>
</comment>
<protein>
    <recommendedName>
        <fullName evidence="1">6,7-dimethyl-8-ribityllumazine synthase</fullName>
        <shortName evidence="1">DMRL synthase</shortName>
        <shortName evidence="1">LS</shortName>
        <shortName evidence="1">Lumazine synthase</shortName>
        <ecNumber evidence="1">2.5.1.78</ecNumber>
    </recommendedName>
</protein>
<sequence length="147" mass="15933">MSCGDKIRIAIVVSEFNYDVTRVMEEKAIDHARFLGAEVSLVARSPGTFDTPFIVSRLLATHSEVDAVAVLGAVIKGDTKHDEVVAHQAARKLLDLSIEYGKPVTLGIIGPGASRLEAIERAEEYARRAVESAVKLARRSKELSGEC</sequence>
<reference key="1">
    <citation type="journal article" date="1999" name="DNA Res.">
        <title>Complete genome sequence of an aerobic hyper-thermophilic crenarchaeon, Aeropyrum pernix K1.</title>
        <authorList>
            <person name="Kawarabayasi Y."/>
            <person name="Hino Y."/>
            <person name="Horikawa H."/>
            <person name="Yamazaki S."/>
            <person name="Haikawa Y."/>
            <person name="Jin-no K."/>
            <person name="Takahashi M."/>
            <person name="Sekine M."/>
            <person name="Baba S."/>
            <person name="Ankai A."/>
            <person name="Kosugi H."/>
            <person name="Hosoyama A."/>
            <person name="Fukui S."/>
            <person name="Nagai Y."/>
            <person name="Nishijima K."/>
            <person name="Nakazawa H."/>
            <person name="Takamiya M."/>
            <person name="Masuda S."/>
            <person name="Funahashi T."/>
            <person name="Tanaka T."/>
            <person name="Kudoh Y."/>
            <person name="Yamazaki J."/>
            <person name="Kushida N."/>
            <person name="Oguchi A."/>
            <person name="Aoki K."/>
            <person name="Kubota K."/>
            <person name="Nakamura Y."/>
            <person name="Nomura N."/>
            <person name="Sako Y."/>
            <person name="Kikuchi H."/>
        </authorList>
    </citation>
    <scope>NUCLEOTIDE SEQUENCE [LARGE SCALE GENOMIC DNA]</scope>
    <source>
        <strain>ATCC 700893 / DSM 11879 / JCM 9820 / NBRC 100138 / K1</strain>
    </source>
</reference>